<protein>
    <recommendedName>
        <fullName evidence="7">Non-specific lipid-transfer protein C4</fullName>
        <shortName evidence="6">OsC4</shortName>
    </recommendedName>
</protein>
<sequence length="94" mass="9082">MAASKGNAAAAACALVLVLLAVGAEAQGGGGGECVPQLNRLLACRAYAVPGAGDPSAECCSALSSISQGCACSAISIMNSLPSRCHLSQINCSA</sequence>
<accession>Q6ZFW0</accession>
<accession>C7J5F0</accession>
<accession>Q40661</accession>
<name>C4_ORYSJ</name>
<proteinExistence type="evidence at transcript level"/>
<feature type="signal peptide" evidence="2">
    <location>
        <begin position="1"/>
        <end position="26"/>
    </location>
</feature>
<feature type="chain" id="PRO_0000436474" description="Non-specific lipid-transfer protein C4">
    <location>
        <begin position="27"/>
        <end position="94"/>
    </location>
</feature>
<feature type="glycosylation site" description="N-linked (GlcNAc...) asparagine" evidence="3">
    <location>
        <position position="91"/>
    </location>
</feature>
<feature type="disulfide bond" evidence="1">
    <location>
        <begin position="34"/>
        <end position="72"/>
    </location>
</feature>
<feature type="disulfide bond" evidence="1">
    <location>
        <begin position="44"/>
        <end position="59"/>
    </location>
</feature>
<feature type="disulfide bond" evidence="1">
    <location>
        <begin position="60"/>
        <end position="85"/>
    </location>
</feature>
<feature type="disulfide bond" evidence="1">
    <location>
        <begin position="70"/>
        <end position="92"/>
    </location>
</feature>
<feature type="sequence conflict" description="In Ref. 1; BAA04695." evidence="7" ref="1">
    <original>V</original>
    <variation>M</variation>
    <location>
        <position position="18"/>
    </location>
</feature>
<feature type="sequence conflict" description="In Ref. 1; BAA04695." evidence="7" ref="1">
    <original>E</original>
    <variation>K</variation>
    <location>
        <position position="33"/>
    </location>
</feature>
<feature type="sequence conflict" description="In Ref. 1; BAA04695." evidence="7" ref="1">
    <original>N</original>
    <variation>K</variation>
    <location>
        <position position="39"/>
    </location>
</feature>
<dbReference type="EMBL" id="D21159">
    <property type="protein sequence ID" value="BAA04695.1"/>
    <property type="status" value="ALT_SEQ"/>
    <property type="molecule type" value="Genomic_DNA"/>
</dbReference>
<dbReference type="EMBL" id="AP004163">
    <property type="protein sequence ID" value="BAD09233.1"/>
    <property type="molecule type" value="Genomic_DNA"/>
</dbReference>
<dbReference type="EMBL" id="AP008214">
    <property type="protein sequence ID" value="BAH94409.1"/>
    <property type="status" value="ALT_SEQ"/>
    <property type="molecule type" value="Genomic_DNA"/>
</dbReference>
<dbReference type="EMBL" id="AP014964">
    <property type="protein sequence ID" value="BAT06541.1"/>
    <property type="molecule type" value="Genomic_DNA"/>
</dbReference>
<dbReference type="EMBL" id="CM000145">
    <property type="protein sequence ID" value="EEE69101.1"/>
    <property type="molecule type" value="Genomic_DNA"/>
</dbReference>
<dbReference type="EMBL" id="AK064717">
    <property type="protein sequence ID" value="BAG89170.1"/>
    <property type="molecule type" value="mRNA"/>
</dbReference>
<dbReference type="EMBL" id="AK119794">
    <property type="protein sequence ID" value="BAG99796.1"/>
    <property type="molecule type" value="mRNA"/>
</dbReference>
<dbReference type="PIR" id="S28607">
    <property type="entry name" value="S28607"/>
</dbReference>
<dbReference type="RefSeq" id="XP_015650280.1">
    <property type="nucleotide sequence ID" value="XM_015794794.1"/>
</dbReference>
<dbReference type="SMR" id="Q6ZFW0"/>
<dbReference type="STRING" id="39947.Q6ZFW0"/>
<dbReference type="GlyCosmos" id="Q6ZFW0">
    <property type="glycosylation" value="1 site, No reported glycans"/>
</dbReference>
<dbReference type="PaxDb" id="39947-Q6ZFW0"/>
<dbReference type="EnsemblPlants" id="Os08t0546300-01">
    <property type="protein sequence ID" value="Os08t0546300-01"/>
    <property type="gene ID" value="Os08g0546300"/>
</dbReference>
<dbReference type="Gramene" id="Os08t0546300-01">
    <property type="protein sequence ID" value="Os08t0546300-01"/>
    <property type="gene ID" value="Os08g0546300"/>
</dbReference>
<dbReference type="KEGG" id="dosa:Os08g0546300"/>
<dbReference type="eggNOG" id="ENOG502S7SH">
    <property type="taxonomic scope" value="Eukaryota"/>
</dbReference>
<dbReference type="HOGENOM" id="CLU_177257_0_0_1"/>
<dbReference type="InParanoid" id="Q6ZFW0"/>
<dbReference type="OMA" id="SAVNHEC"/>
<dbReference type="OrthoDB" id="1873458at2759"/>
<dbReference type="Proteomes" id="UP000000763">
    <property type="component" value="Chromosome 8"/>
</dbReference>
<dbReference type="Proteomes" id="UP000007752">
    <property type="component" value="Chromosome 8"/>
</dbReference>
<dbReference type="Proteomes" id="UP000059680">
    <property type="component" value="Chromosome 8"/>
</dbReference>
<dbReference type="GO" id="GO:0008289">
    <property type="term" value="F:lipid binding"/>
    <property type="evidence" value="ECO:0007669"/>
    <property type="project" value="UniProtKB-KW"/>
</dbReference>
<dbReference type="Gene3D" id="1.10.110.10">
    <property type="entry name" value="Plant lipid-transfer and hydrophobic proteins"/>
    <property type="match status" value="1"/>
</dbReference>
<dbReference type="InterPro" id="IPR036312">
    <property type="entry name" value="Bifun_inhib/LTP/seed_sf"/>
</dbReference>
<dbReference type="InterPro" id="IPR016140">
    <property type="entry name" value="Bifunc_inhib/LTP/seed_store"/>
</dbReference>
<dbReference type="PANTHER" id="PTHR35501:SF7">
    <property type="entry name" value="NON-SPECIFIC LIPID-TRANSFER PROTEIN C4"/>
    <property type="match status" value="1"/>
</dbReference>
<dbReference type="PANTHER" id="PTHR35501">
    <property type="entry name" value="PROTEIN YY1"/>
    <property type="match status" value="1"/>
</dbReference>
<dbReference type="Pfam" id="PF00234">
    <property type="entry name" value="Tryp_alpha_amyl"/>
    <property type="match status" value="1"/>
</dbReference>
<dbReference type="SMART" id="SM00499">
    <property type="entry name" value="AAI"/>
    <property type="match status" value="1"/>
</dbReference>
<dbReference type="SUPFAM" id="SSF47699">
    <property type="entry name" value="Bifunctional inhibitor/lipid-transfer protein/seed storage 2S albumin"/>
    <property type="match status" value="1"/>
</dbReference>
<reference key="1">
    <citation type="journal article" date="1992" name="Plant Mol. Biol.">
        <title>Isolation of genes abundantly expressed in rice anthers at the microspore stage.</title>
        <authorList>
            <person name="Tsuchiya T."/>
            <person name="Toriyama K."/>
            <person name="Nasrallah M.E."/>
            <person name="Ejiri S."/>
        </authorList>
    </citation>
    <scope>NUCLEOTIDE SEQUENCE [GENOMIC DNA]</scope>
    <scope>DEVELOPMENTAL STAGE</scope>
</reference>
<reference key="2">
    <citation type="journal article" date="2005" name="Nature">
        <title>The map-based sequence of the rice genome.</title>
        <authorList>
            <consortium name="International rice genome sequencing project (IRGSP)"/>
        </authorList>
    </citation>
    <scope>NUCLEOTIDE SEQUENCE [LARGE SCALE GENOMIC DNA]</scope>
    <source>
        <strain>cv. Nipponbare</strain>
    </source>
</reference>
<reference key="3">
    <citation type="journal article" date="2008" name="Nucleic Acids Res.">
        <title>The rice annotation project database (RAP-DB): 2008 update.</title>
        <authorList>
            <consortium name="The rice annotation project (RAP)"/>
        </authorList>
    </citation>
    <scope>GENOME REANNOTATION</scope>
    <source>
        <strain>cv. Nipponbare</strain>
    </source>
</reference>
<reference key="4">
    <citation type="journal article" date="2013" name="Rice">
        <title>Improvement of the Oryza sativa Nipponbare reference genome using next generation sequence and optical map data.</title>
        <authorList>
            <person name="Kawahara Y."/>
            <person name="de la Bastide M."/>
            <person name="Hamilton J.P."/>
            <person name="Kanamori H."/>
            <person name="McCombie W.R."/>
            <person name="Ouyang S."/>
            <person name="Schwartz D.C."/>
            <person name="Tanaka T."/>
            <person name="Wu J."/>
            <person name="Zhou S."/>
            <person name="Childs K.L."/>
            <person name="Davidson R.M."/>
            <person name="Lin H."/>
            <person name="Quesada-Ocampo L."/>
            <person name="Vaillancourt B."/>
            <person name="Sakai H."/>
            <person name="Lee S.S."/>
            <person name="Kim J."/>
            <person name="Numa H."/>
            <person name="Itoh T."/>
            <person name="Buell C.R."/>
            <person name="Matsumoto T."/>
        </authorList>
    </citation>
    <scope>GENOME REANNOTATION</scope>
    <source>
        <strain>cv. Nipponbare</strain>
    </source>
</reference>
<reference key="5">
    <citation type="journal article" date="2005" name="PLoS Biol.">
        <title>The genomes of Oryza sativa: a history of duplications.</title>
        <authorList>
            <person name="Yu J."/>
            <person name="Wang J."/>
            <person name="Lin W."/>
            <person name="Li S."/>
            <person name="Li H."/>
            <person name="Zhou J."/>
            <person name="Ni P."/>
            <person name="Dong W."/>
            <person name="Hu S."/>
            <person name="Zeng C."/>
            <person name="Zhang J."/>
            <person name="Zhang Y."/>
            <person name="Li R."/>
            <person name="Xu Z."/>
            <person name="Li S."/>
            <person name="Li X."/>
            <person name="Zheng H."/>
            <person name="Cong L."/>
            <person name="Lin L."/>
            <person name="Yin J."/>
            <person name="Geng J."/>
            <person name="Li G."/>
            <person name="Shi J."/>
            <person name="Liu J."/>
            <person name="Lv H."/>
            <person name="Li J."/>
            <person name="Wang J."/>
            <person name="Deng Y."/>
            <person name="Ran L."/>
            <person name="Shi X."/>
            <person name="Wang X."/>
            <person name="Wu Q."/>
            <person name="Li C."/>
            <person name="Ren X."/>
            <person name="Wang J."/>
            <person name="Wang X."/>
            <person name="Li D."/>
            <person name="Liu D."/>
            <person name="Zhang X."/>
            <person name="Ji Z."/>
            <person name="Zhao W."/>
            <person name="Sun Y."/>
            <person name="Zhang Z."/>
            <person name="Bao J."/>
            <person name="Han Y."/>
            <person name="Dong L."/>
            <person name="Ji J."/>
            <person name="Chen P."/>
            <person name="Wu S."/>
            <person name="Liu J."/>
            <person name="Xiao Y."/>
            <person name="Bu D."/>
            <person name="Tan J."/>
            <person name="Yang L."/>
            <person name="Ye C."/>
            <person name="Zhang J."/>
            <person name="Xu J."/>
            <person name="Zhou Y."/>
            <person name="Yu Y."/>
            <person name="Zhang B."/>
            <person name="Zhuang S."/>
            <person name="Wei H."/>
            <person name="Liu B."/>
            <person name="Lei M."/>
            <person name="Yu H."/>
            <person name="Li Y."/>
            <person name="Xu H."/>
            <person name="Wei S."/>
            <person name="He X."/>
            <person name="Fang L."/>
            <person name="Zhang Z."/>
            <person name="Zhang Y."/>
            <person name="Huang X."/>
            <person name="Su Z."/>
            <person name="Tong W."/>
            <person name="Li J."/>
            <person name="Tong Z."/>
            <person name="Li S."/>
            <person name="Ye J."/>
            <person name="Wang L."/>
            <person name="Fang L."/>
            <person name="Lei T."/>
            <person name="Chen C.-S."/>
            <person name="Chen H.-C."/>
            <person name="Xu Z."/>
            <person name="Li H."/>
            <person name="Huang H."/>
            <person name="Zhang F."/>
            <person name="Xu H."/>
            <person name="Li N."/>
            <person name="Zhao C."/>
            <person name="Li S."/>
            <person name="Dong L."/>
            <person name="Huang Y."/>
            <person name="Li L."/>
            <person name="Xi Y."/>
            <person name="Qi Q."/>
            <person name="Li W."/>
            <person name="Zhang B."/>
            <person name="Hu W."/>
            <person name="Zhang Y."/>
            <person name="Tian X."/>
            <person name="Jiao Y."/>
            <person name="Liang X."/>
            <person name="Jin J."/>
            <person name="Gao L."/>
            <person name="Zheng W."/>
            <person name="Hao B."/>
            <person name="Liu S.-M."/>
            <person name="Wang W."/>
            <person name="Yuan L."/>
            <person name="Cao M."/>
            <person name="McDermott J."/>
            <person name="Samudrala R."/>
            <person name="Wang J."/>
            <person name="Wong G.K.-S."/>
            <person name="Yang H."/>
        </authorList>
    </citation>
    <scope>NUCLEOTIDE SEQUENCE [LARGE SCALE GENOMIC DNA]</scope>
    <source>
        <strain>cv. Nipponbare</strain>
    </source>
</reference>
<reference key="6">
    <citation type="journal article" date="2003" name="Science">
        <title>Collection, mapping, and annotation of over 28,000 cDNA clones from japonica rice.</title>
        <authorList>
            <consortium name="The rice full-length cDNA consortium"/>
        </authorList>
    </citation>
    <scope>NUCLEOTIDE SEQUENCE [LARGE SCALE MRNA]</scope>
    <source>
        <strain>cv. Nipponbare</strain>
    </source>
</reference>
<reference key="7">
    <citation type="journal article" date="2005" name="Plant Cell">
        <title>Rice undeveloped tapetum1 is a major regulator of early tapetum development.</title>
        <authorList>
            <person name="Jung K.H."/>
            <person name="Han M.J."/>
            <person name="Lee Y.S."/>
            <person name="Kim Y.W."/>
            <person name="Hwang I."/>
            <person name="Kim M.J."/>
            <person name="Kim Y.K."/>
            <person name="Nahm B.H."/>
            <person name="An G."/>
        </authorList>
    </citation>
    <scope>FUNCTION</scope>
</reference>
<organism>
    <name type="scientific">Oryza sativa subsp. japonica</name>
    <name type="common">Rice</name>
    <dbReference type="NCBI Taxonomy" id="39947"/>
    <lineage>
        <taxon>Eukaryota</taxon>
        <taxon>Viridiplantae</taxon>
        <taxon>Streptophyta</taxon>
        <taxon>Embryophyta</taxon>
        <taxon>Tracheophyta</taxon>
        <taxon>Spermatophyta</taxon>
        <taxon>Magnoliopsida</taxon>
        <taxon>Liliopsida</taxon>
        <taxon>Poales</taxon>
        <taxon>Poaceae</taxon>
        <taxon>BOP clade</taxon>
        <taxon>Oryzoideae</taxon>
        <taxon>Oryzeae</taxon>
        <taxon>Oryzinae</taxon>
        <taxon>Oryza</taxon>
        <taxon>Oryza sativa</taxon>
    </lineage>
</organism>
<keyword id="KW-1015">Disulfide bond</keyword>
<keyword id="KW-0325">Glycoprotein</keyword>
<keyword id="KW-0446">Lipid-binding</keyword>
<keyword id="KW-1185">Reference proteome</keyword>
<keyword id="KW-0732">Signal</keyword>
<comment type="function">
    <text evidence="5">Lipid-transfer protein that may be regulated by the transcription factor UDT1 in developing anthers and play a role in tapetum development.</text>
</comment>
<comment type="developmental stage">
    <text evidence="4">During anther development, expressed in tapetal cells of immature anthers, but not in the microspores or mature pollen.</text>
</comment>
<comment type="similarity">
    <text evidence="7">Belongs to the plant LTP family.</text>
</comment>
<comment type="sequence caution" evidence="7">
    <conflict type="miscellaneous discrepancy">
        <sequence resource="EMBL-CDS" id="BAA04695"/>
    </conflict>
    <text>Sequencing errors.</text>
</comment>
<comment type="sequence caution" evidence="7">
    <conflict type="erroneous gene model prediction">
        <sequence resource="EMBL-CDS" id="BAH94409"/>
    </conflict>
</comment>
<gene>
    <name evidence="7" type="primary">C4</name>
    <name evidence="9" type="ordered locus">Os08g0546300</name>
    <name evidence="8" type="ORF">OJ1323_A06.22</name>
    <name evidence="10" type="ORF">OsJ_28169</name>
</gene>
<evidence type="ECO:0000250" key="1">
    <source>
        <dbReference type="UniProtKB" id="Q0IQK9"/>
    </source>
</evidence>
<evidence type="ECO:0000255" key="2"/>
<evidence type="ECO:0000255" key="3">
    <source>
        <dbReference type="PROSITE-ProRule" id="PRU00498"/>
    </source>
</evidence>
<evidence type="ECO:0000269" key="4">
    <source>
    </source>
</evidence>
<evidence type="ECO:0000269" key="5">
    <source>
    </source>
</evidence>
<evidence type="ECO:0000303" key="6">
    <source>
    </source>
</evidence>
<evidence type="ECO:0000305" key="7"/>
<evidence type="ECO:0000312" key="8">
    <source>
        <dbReference type="EMBL" id="BAD09233.1"/>
    </source>
</evidence>
<evidence type="ECO:0000312" key="9">
    <source>
        <dbReference type="EMBL" id="BAT06541.1"/>
    </source>
</evidence>
<evidence type="ECO:0000312" key="10">
    <source>
        <dbReference type="EMBL" id="EEE69101.1"/>
    </source>
</evidence>